<comment type="function">
    <text evidence="1">Binds to the 23S rRNA.</text>
</comment>
<comment type="subunit">
    <text evidence="1">Part of the 50S ribosomal subunit.</text>
</comment>
<comment type="similarity">
    <text evidence="1">Belongs to the universal ribosomal protein uL15 family.</text>
</comment>
<comment type="sequence caution" evidence="3">
    <conflict type="erroneous initiation">
        <sequence resource="EMBL-CDS" id="AAD08342"/>
    </conflict>
</comment>
<gene>
    <name evidence="1" type="primary">rplO</name>
    <name type="ordered locus">HP_1301</name>
</gene>
<reference key="1">
    <citation type="journal article" date="1997" name="Nature">
        <title>The complete genome sequence of the gastric pathogen Helicobacter pylori.</title>
        <authorList>
            <person name="Tomb J.-F."/>
            <person name="White O."/>
            <person name="Kerlavage A.R."/>
            <person name="Clayton R.A."/>
            <person name="Sutton G.G."/>
            <person name="Fleischmann R.D."/>
            <person name="Ketchum K.A."/>
            <person name="Klenk H.-P."/>
            <person name="Gill S.R."/>
            <person name="Dougherty B.A."/>
            <person name="Nelson K.E."/>
            <person name="Quackenbush J."/>
            <person name="Zhou L."/>
            <person name="Kirkness E.F."/>
            <person name="Peterson S.N."/>
            <person name="Loftus B.J."/>
            <person name="Richardson D.L."/>
            <person name="Dodson R.J."/>
            <person name="Khalak H.G."/>
            <person name="Glodek A."/>
            <person name="McKenney K."/>
            <person name="FitzGerald L.M."/>
            <person name="Lee N."/>
            <person name="Adams M.D."/>
            <person name="Hickey E.K."/>
            <person name="Berg D.E."/>
            <person name="Gocayne J.D."/>
            <person name="Utterback T.R."/>
            <person name="Peterson J.D."/>
            <person name="Kelley J.M."/>
            <person name="Cotton M.D."/>
            <person name="Weidman J.F."/>
            <person name="Fujii C."/>
            <person name="Bowman C."/>
            <person name="Watthey L."/>
            <person name="Wallin E."/>
            <person name="Hayes W.S."/>
            <person name="Borodovsky M."/>
            <person name="Karp P.D."/>
            <person name="Smith H.O."/>
            <person name="Fraser C.M."/>
            <person name="Venter J.C."/>
        </authorList>
    </citation>
    <scope>NUCLEOTIDE SEQUENCE [LARGE SCALE GENOMIC DNA]</scope>
    <source>
        <strain>ATCC 700392 / 26695</strain>
    </source>
</reference>
<proteinExistence type="inferred from homology"/>
<accession>P56040</accession>
<dbReference type="EMBL" id="AE000511">
    <property type="protein sequence ID" value="AAD08342.1"/>
    <property type="status" value="ALT_INIT"/>
    <property type="molecule type" value="Genomic_DNA"/>
</dbReference>
<dbReference type="PIR" id="E64682">
    <property type="entry name" value="E64682"/>
</dbReference>
<dbReference type="RefSeq" id="NP_208093.2">
    <property type="nucleotide sequence ID" value="NC_000915.1"/>
</dbReference>
<dbReference type="RefSeq" id="WP_000522167.1">
    <property type="nucleotide sequence ID" value="NC_018939.1"/>
</dbReference>
<dbReference type="SMR" id="P56040"/>
<dbReference type="DIP" id="DIP-3703N"/>
<dbReference type="FunCoup" id="P56040">
    <property type="interactions" value="427"/>
</dbReference>
<dbReference type="IntAct" id="P56040">
    <property type="interactions" value="5"/>
</dbReference>
<dbReference type="MINT" id="P56040"/>
<dbReference type="STRING" id="85962.HP_1301"/>
<dbReference type="PaxDb" id="85962-C694_06720"/>
<dbReference type="EnsemblBacteria" id="AAD08342">
    <property type="protein sequence ID" value="AAD08342"/>
    <property type="gene ID" value="HP_1301"/>
</dbReference>
<dbReference type="KEGG" id="heo:C694_06720"/>
<dbReference type="KEGG" id="hpy:HP_1301"/>
<dbReference type="PATRIC" id="fig|85962.47.peg.1395"/>
<dbReference type="eggNOG" id="COG0200">
    <property type="taxonomic scope" value="Bacteria"/>
</dbReference>
<dbReference type="InParanoid" id="P56040"/>
<dbReference type="OrthoDB" id="9810293at2"/>
<dbReference type="PhylomeDB" id="P56040"/>
<dbReference type="Proteomes" id="UP000000429">
    <property type="component" value="Chromosome"/>
</dbReference>
<dbReference type="GO" id="GO:0022625">
    <property type="term" value="C:cytosolic large ribosomal subunit"/>
    <property type="evidence" value="ECO:0000318"/>
    <property type="project" value="GO_Central"/>
</dbReference>
<dbReference type="GO" id="GO:0019843">
    <property type="term" value="F:rRNA binding"/>
    <property type="evidence" value="ECO:0007669"/>
    <property type="project" value="UniProtKB-UniRule"/>
</dbReference>
<dbReference type="GO" id="GO:0003735">
    <property type="term" value="F:structural constituent of ribosome"/>
    <property type="evidence" value="ECO:0000318"/>
    <property type="project" value="GO_Central"/>
</dbReference>
<dbReference type="GO" id="GO:0006412">
    <property type="term" value="P:translation"/>
    <property type="evidence" value="ECO:0007669"/>
    <property type="project" value="UniProtKB-UniRule"/>
</dbReference>
<dbReference type="HAMAP" id="MF_01341">
    <property type="entry name" value="Ribosomal_uL15"/>
    <property type="match status" value="1"/>
</dbReference>
<dbReference type="InterPro" id="IPR030878">
    <property type="entry name" value="Ribosomal_uL15"/>
</dbReference>
<dbReference type="InterPro" id="IPR036227">
    <property type="entry name" value="Ribosomal_uL15/eL18_sf"/>
</dbReference>
<dbReference type="InterPro" id="IPR005749">
    <property type="entry name" value="Ribosomal_uL15_bac-type"/>
</dbReference>
<dbReference type="NCBIfam" id="TIGR01071">
    <property type="entry name" value="rplO_bact"/>
    <property type="match status" value="1"/>
</dbReference>
<dbReference type="PANTHER" id="PTHR12934">
    <property type="entry name" value="50S RIBOSOMAL PROTEIN L15"/>
    <property type="match status" value="1"/>
</dbReference>
<dbReference type="PANTHER" id="PTHR12934:SF11">
    <property type="entry name" value="LARGE RIBOSOMAL SUBUNIT PROTEIN UL15M"/>
    <property type="match status" value="1"/>
</dbReference>
<dbReference type="SUPFAM" id="SSF52080">
    <property type="entry name" value="Ribosomal proteins L15p and L18e"/>
    <property type="match status" value="1"/>
</dbReference>
<sequence>MGLENLKPAKGSVKKIKRVGRGQGSGMGKTATRGGKGQTARTGYKAKRGFEGGQQPLQRRLPKIGFRTKDSHIYSINVEKNEAIKNLEEITFSSLRALHHFPLYIEGVKLIGKDAKNLASKIKDERIKTSGQK</sequence>
<feature type="chain" id="PRO_0000104732" description="Large ribosomal subunit protein uL15">
    <location>
        <begin position="1"/>
        <end position="133"/>
    </location>
</feature>
<feature type="region of interest" description="Disordered" evidence="2">
    <location>
        <begin position="1"/>
        <end position="64"/>
    </location>
</feature>
<evidence type="ECO:0000255" key="1">
    <source>
        <dbReference type="HAMAP-Rule" id="MF_01341"/>
    </source>
</evidence>
<evidence type="ECO:0000256" key="2">
    <source>
        <dbReference type="SAM" id="MobiDB-lite"/>
    </source>
</evidence>
<evidence type="ECO:0000305" key="3"/>
<keyword id="KW-1185">Reference proteome</keyword>
<keyword id="KW-0687">Ribonucleoprotein</keyword>
<keyword id="KW-0689">Ribosomal protein</keyword>
<keyword id="KW-0694">RNA-binding</keyword>
<keyword id="KW-0699">rRNA-binding</keyword>
<name>RL15_HELPY</name>
<protein>
    <recommendedName>
        <fullName evidence="1">Large ribosomal subunit protein uL15</fullName>
    </recommendedName>
    <alternativeName>
        <fullName evidence="3">50S ribosomal protein L15</fullName>
    </alternativeName>
</protein>
<organism>
    <name type="scientific">Helicobacter pylori (strain ATCC 700392 / 26695)</name>
    <name type="common">Campylobacter pylori</name>
    <dbReference type="NCBI Taxonomy" id="85962"/>
    <lineage>
        <taxon>Bacteria</taxon>
        <taxon>Pseudomonadati</taxon>
        <taxon>Campylobacterota</taxon>
        <taxon>Epsilonproteobacteria</taxon>
        <taxon>Campylobacterales</taxon>
        <taxon>Helicobacteraceae</taxon>
        <taxon>Helicobacter</taxon>
    </lineage>
</organism>